<name>GLMU_STUS1</name>
<keyword id="KW-0012">Acyltransferase</keyword>
<keyword id="KW-0133">Cell shape</keyword>
<keyword id="KW-0961">Cell wall biogenesis/degradation</keyword>
<keyword id="KW-0963">Cytoplasm</keyword>
<keyword id="KW-0460">Magnesium</keyword>
<keyword id="KW-0479">Metal-binding</keyword>
<keyword id="KW-0511">Multifunctional enzyme</keyword>
<keyword id="KW-0548">Nucleotidyltransferase</keyword>
<keyword id="KW-0573">Peptidoglycan synthesis</keyword>
<keyword id="KW-1185">Reference proteome</keyword>
<keyword id="KW-0677">Repeat</keyword>
<keyword id="KW-0808">Transferase</keyword>
<proteinExistence type="inferred from homology"/>
<organism>
    <name type="scientific">Stutzerimonas stutzeri (strain A1501)</name>
    <name type="common">Pseudomonas stutzeri</name>
    <dbReference type="NCBI Taxonomy" id="379731"/>
    <lineage>
        <taxon>Bacteria</taxon>
        <taxon>Pseudomonadati</taxon>
        <taxon>Pseudomonadota</taxon>
        <taxon>Gammaproteobacteria</taxon>
        <taxon>Pseudomonadales</taxon>
        <taxon>Pseudomonadaceae</taxon>
        <taxon>Stutzerimonas</taxon>
    </lineage>
</organism>
<feature type="chain" id="PRO_1000056189" description="Bifunctional protein GlmU">
    <location>
        <begin position="1"/>
        <end position="452"/>
    </location>
</feature>
<feature type="region of interest" description="Pyrophosphorylase" evidence="1">
    <location>
        <begin position="1"/>
        <end position="226"/>
    </location>
</feature>
<feature type="region of interest" description="Linker" evidence="1">
    <location>
        <begin position="227"/>
        <end position="247"/>
    </location>
</feature>
<feature type="region of interest" description="N-acetyltransferase" evidence="1">
    <location>
        <begin position="248"/>
        <end position="452"/>
    </location>
</feature>
<feature type="active site" description="Proton acceptor" evidence="1">
    <location>
        <position position="360"/>
    </location>
</feature>
<feature type="binding site" evidence="1">
    <location>
        <begin position="8"/>
        <end position="11"/>
    </location>
    <ligand>
        <name>UDP-N-acetyl-alpha-D-glucosamine</name>
        <dbReference type="ChEBI" id="CHEBI:57705"/>
    </ligand>
</feature>
<feature type="binding site" evidence="1">
    <location>
        <position position="22"/>
    </location>
    <ligand>
        <name>UDP-N-acetyl-alpha-D-glucosamine</name>
        <dbReference type="ChEBI" id="CHEBI:57705"/>
    </ligand>
</feature>
<feature type="binding site" evidence="1">
    <location>
        <position position="73"/>
    </location>
    <ligand>
        <name>UDP-N-acetyl-alpha-D-glucosamine</name>
        <dbReference type="ChEBI" id="CHEBI:57705"/>
    </ligand>
</feature>
<feature type="binding site" evidence="1">
    <location>
        <begin position="78"/>
        <end position="79"/>
    </location>
    <ligand>
        <name>UDP-N-acetyl-alpha-D-glucosamine</name>
        <dbReference type="ChEBI" id="CHEBI:57705"/>
    </ligand>
</feature>
<feature type="binding site" evidence="1">
    <location>
        <begin position="99"/>
        <end position="101"/>
    </location>
    <ligand>
        <name>UDP-N-acetyl-alpha-D-glucosamine</name>
        <dbReference type="ChEBI" id="CHEBI:57705"/>
    </ligand>
</feature>
<feature type="binding site" evidence="1">
    <location>
        <position position="101"/>
    </location>
    <ligand>
        <name>Mg(2+)</name>
        <dbReference type="ChEBI" id="CHEBI:18420"/>
    </ligand>
</feature>
<feature type="binding site" evidence="1">
    <location>
        <position position="136"/>
    </location>
    <ligand>
        <name>UDP-N-acetyl-alpha-D-glucosamine</name>
        <dbReference type="ChEBI" id="CHEBI:57705"/>
    </ligand>
</feature>
<feature type="binding site" evidence="1">
    <location>
        <position position="151"/>
    </location>
    <ligand>
        <name>UDP-N-acetyl-alpha-D-glucosamine</name>
        <dbReference type="ChEBI" id="CHEBI:57705"/>
    </ligand>
</feature>
<feature type="binding site" evidence="1">
    <location>
        <position position="166"/>
    </location>
    <ligand>
        <name>UDP-N-acetyl-alpha-D-glucosamine</name>
        <dbReference type="ChEBI" id="CHEBI:57705"/>
    </ligand>
</feature>
<feature type="binding site" evidence="1">
    <location>
        <position position="224"/>
    </location>
    <ligand>
        <name>Mg(2+)</name>
        <dbReference type="ChEBI" id="CHEBI:18420"/>
    </ligand>
</feature>
<feature type="binding site" evidence="1">
    <location>
        <position position="224"/>
    </location>
    <ligand>
        <name>UDP-N-acetyl-alpha-D-glucosamine</name>
        <dbReference type="ChEBI" id="CHEBI:57705"/>
    </ligand>
</feature>
<feature type="binding site" evidence="1">
    <location>
        <position position="330"/>
    </location>
    <ligand>
        <name>UDP-N-acetyl-alpha-D-glucosamine</name>
        <dbReference type="ChEBI" id="CHEBI:57705"/>
    </ligand>
</feature>
<feature type="binding site" evidence="1">
    <location>
        <position position="348"/>
    </location>
    <ligand>
        <name>UDP-N-acetyl-alpha-D-glucosamine</name>
        <dbReference type="ChEBI" id="CHEBI:57705"/>
    </ligand>
</feature>
<feature type="binding site" evidence="1">
    <location>
        <position position="363"/>
    </location>
    <ligand>
        <name>UDP-N-acetyl-alpha-D-glucosamine</name>
        <dbReference type="ChEBI" id="CHEBI:57705"/>
    </ligand>
</feature>
<feature type="binding site" evidence="1">
    <location>
        <position position="374"/>
    </location>
    <ligand>
        <name>UDP-N-acetyl-alpha-D-glucosamine</name>
        <dbReference type="ChEBI" id="CHEBI:57705"/>
    </ligand>
</feature>
<feature type="binding site" evidence="1">
    <location>
        <position position="377"/>
    </location>
    <ligand>
        <name>acetyl-CoA</name>
        <dbReference type="ChEBI" id="CHEBI:57288"/>
    </ligand>
</feature>
<feature type="binding site" evidence="1">
    <location>
        <begin position="383"/>
        <end position="384"/>
    </location>
    <ligand>
        <name>acetyl-CoA</name>
        <dbReference type="ChEBI" id="CHEBI:57288"/>
    </ligand>
</feature>
<feature type="binding site" evidence="1">
    <location>
        <position position="402"/>
    </location>
    <ligand>
        <name>acetyl-CoA</name>
        <dbReference type="ChEBI" id="CHEBI:57288"/>
    </ligand>
</feature>
<feature type="binding site" evidence="1">
    <location>
        <position position="420"/>
    </location>
    <ligand>
        <name>acetyl-CoA</name>
        <dbReference type="ChEBI" id="CHEBI:57288"/>
    </ligand>
</feature>
<feature type="binding site" evidence="1">
    <location>
        <position position="437"/>
    </location>
    <ligand>
        <name>acetyl-CoA</name>
        <dbReference type="ChEBI" id="CHEBI:57288"/>
    </ligand>
</feature>
<accession>A4VS60</accession>
<comment type="function">
    <text evidence="1">Catalyzes the last two sequential reactions in the de novo biosynthetic pathway for UDP-N-acetylglucosamine (UDP-GlcNAc). The C-terminal domain catalyzes the transfer of acetyl group from acetyl coenzyme A to glucosamine-1-phosphate (GlcN-1-P) to produce N-acetylglucosamine-1-phosphate (GlcNAc-1-P), which is converted into UDP-GlcNAc by the transfer of uridine 5-monophosphate (from uridine 5-triphosphate), a reaction catalyzed by the N-terminal domain.</text>
</comment>
<comment type="catalytic activity">
    <reaction evidence="1">
        <text>alpha-D-glucosamine 1-phosphate + acetyl-CoA = N-acetyl-alpha-D-glucosamine 1-phosphate + CoA + H(+)</text>
        <dbReference type="Rhea" id="RHEA:13725"/>
        <dbReference type="ChEBI" id="CHEBI:15378"/>
        <dbReference type="ChEBI" id="CHEBI:57287"/>
        <dbReference type="ChEBI" id="CHEBI:57288"/>
        <dbReference type="ChEBI" id="CHEBI:57776"/>
        <dbReference type="ChEBI" id="CHEBI:58516"/>
        <dbReference type="EC" id="2.3.1.157"/>
    </reaction>
</comment>
<comment type="catalytic activity">
    <reaction evidence="1">
        <text>N-acetyl-alpha-D-glucosamine 1-phosphate + UTP + H(+) = UDP-N-acetyl-alpha-D-glucosamine + diphosphate</text>
        <dbReference type="Rhea" id="RHEA:13509"/>
        <dbReference type="ChEBI" id="CHEBI:15378"/>
        <dbReference type="ChEBI" id="CHEBI:33019"/>
        <dbReference type="ChEBI" id="CHEBI:46398"/>
        <dbReference type="ChEBI" id="CHEBI:57705"/>
        <dbReference type="ChEBI" id="CHEBI:57776"/>
        <dbReference type="EC" id="2.7.7.23"/>
    </reaction>
</comment>
<comment type="cofactor">
    <cofactor evidence="1">
        <name>Mg(2+)</name>
        <dbReference type="ChEBI" id="CHEBI:18420"/>
    </cofactor>
    <text evidence="1">Binds 1 Mg(2+) ion per subunit.</text>
</comment>
<comment type="pathway">
    <text evidence="1">Nucleotide-sugar biosynthesis; UDP-N-acetyl-alpha-D-glucosamine biosynthesis; N-acetyl-alpha-D-glucosamine 1-phosphate from alpha-D-glucosamine 6-phosphate (route II): step 2/2.</text>
</comment>
<comment type="pathway">
    <text evidence="1">Nucleotide-sugar biosynthesis; UDP-N-acetyl-alpha-D-glucosamine biosynthesis; UDP-N-acetyl-alpha-D-glucosamine from N-acetyl-alpha-D-glucosamine 1-phosphate: step 1/1.</text>
</comment>
<comment type="pathway">
    <text evidence="1">Bacterial outer membrane biogenesis; LPS lipid A biosynthesis.</text>
</comment>
<comment type="subunit">
    <text evidence="1">Homotrimer.</text>
</comment>
<comment type="subcellular location">
    <subcellularLocation>
        <location evidence="1">Cytoplasm</location>
    </subcellularLocation>
</comment>
<comment type="similarity">
    <text evidence="1">In the N-terminal section; belongs to the N-acetylglucosamine-1-phosphate uridyltransferase family.</text>
</comment>
<comment type="similarity">
    <text evidence="1">In the C-terminal section; belongs to the transferase hexapeptide repeat family.</text>
</comment>
<gene>
    <name evidence="1" type="primary">glmU</name>
    <name type="ordered locus">PST_4189</name>
</gene>
<evidence type="ECO:0000255" key="1">
    <source>
        <dbReference type="HAMAP-Rule" id="MF_01631"/>
    </source>
</evidence>
<protein>
    <recommendedName>
        <fullName evidence="1">Bifunctional protein GlmU</fullName>
    </recommendedName>
    <domain>
        <recommendedName>
            <fullName evidence="1">UDP-N-acetylglucosamine pyrophosphorylase</fullName>
            <ecNumber evidence="1">2.7.7.23</ecNumber>
        </recommendedName>
        <alternativeName>
            <fullName evidence="1">N-acetylglucosamine-1-phosphate uridyltransferase</fullName>
        </alternativeName>
    </domain>
    <domain>
        <recommendedName>
            <fullName evidence="1">Glucosamine-1-phosphate N-acetyltransferase</fullName>
            <ecNumber evidence="1">2.3.1.157</ecNumber>
        </recommendedName>
    </domain>
</protein>
<sequence length="452" mass="47934">MSLDIVILAAGQGTRMRSALPKVLHPVAGQSMLGHVIATARALQPRSIQVVIGHGAEQVRQRLAGDDLNFVVQAEQLGTGHAVAQALPHLSAERVLILYGDVPLIEAETLQRLLQKVGPEQLALLTVTLDDPTGYGRIVRDGRGEVQAIVEHKDASADQRAIREGNTGILAVPGSRIGEWLGRLSNSNAQGEYYLTDVIAMAVADGLRVATEQPADAMEVQGANDRIQLAELERHYQLRAARRLMAQGVTLRDPARFDLRGEVSVGRDVLIDVNVVLEGRVVIEDDVQIGPNCVIKDSTLRRGAVVKANSHLEGAVMGEGADCGPFARLRPGSLLGAKAHVGNFVEMKNASLGDGAKAGHLSYLGDAEIGARSNIGAGTITCNYDGANKFRTVMGEDVFIGSNSSLVAPLNLGDGATTGAGSTITDDVPAHTLALGRGRQRNIDGWQRPTKK</sequence>
<dbReference type="EC" id="2.7.7.23" evidence="1"/>
<dbReference type="EC" id="2.3.1.157" evidence="1"/>
<dbReference type="EMBL" id="CP000304">
    <property type="protein sequence ID" value="ABP81811.1"/>
    <property type="molecule type" value="Genomic_DNA"/>
</dbReference>
<dbReference type="RefSeq" id="WP_011915189.1">
    <property type="nucleotide sequence ID" value="NC_009434.1"/>
</dbReference>
<dbReference type="SMR" id="A4VS60"/>
<dbReference type="GeneID" id="66823483"/>
<dbReference type="KEGG" id="psa:PST_4189"/>
<dbReference type="eggNOG" id="COG1207">
    <property type="taxonomic scope" value="Bacteria"/>
</dbReference>
<dbReference type="HOGENOM" id="CLU_029499_15_2_6"/>
<dbReference type="UniPathway" id="UPA00113">
    <property type="reaction ID" value="UER00532"/>
</dbReference>
<dbReference type="UniPathway" id="UPA00113">
    <property type="reaction ID" value="UER00533"/>
</dbReference>
<dbReference type="UniPathway" id="UPA00973"/>
<dbReference type="Proteomes" id="UP000000233">
    <property type="component" value="Chromosome"/>
</dbReference>
<dbReference type="GO" id="GO:0005737">
    <property type="term" value="C:cytoplasm"/>
    <property type="evidence" value="ECO:0007669"/>
    <property type="project" value="UniProtKB-SubCell"/>
</dbReference>
<dbReference type="GO" id="GO:0016020">
    <property type="term" value="C:membrane"/>
    <property type="evidence" value="ECO:0007669"/>
    <property type="project" value="GOC"/>
</dbReference>
<dbReference type="GO" id="GO:0019134">
    <property type="term" value="F:glucosamine-1-phosphate N-acetyltransferase activity"/>
    <property type="evidence" value="ECO:0007669"/>
    <property type="project" value="UniProtKB-UniRule"/>
</dbReference>
<dbReference type="GO" id="GO:0000287">
    <property type="term" value="F:magnesium ion binding"/>
    <property type="evidence" value="ECO:0007669"/>
    <property type="project" value="UniProtKB-UniRule"/>
</dbReference>
<dbReference type="GO" id="GO:0003977">
    <property type="term" value="F:UDP-N-acetylglucosamine diphosphorylase activity"/>
    <property type="evidence" value="ECO:0007669"/>
    <property type="project" value="UniProtKB-UniRule"/>
</dbReference>
<dbReference type="GO" id="GO:0000902">
    <property type="term" value="P:cell morphogenesis"/>
    <property type="evidence" value="ECO:0007669"/>
    <property type="project" value="UniProtKB-UniRule"/>
</dbReference>
<dbReference type="GO" id="GO:0071555">
    <property type="term" value="P:cell wall organization"/>
    <property type="evidence" value="ECO:0007669"/>
    <property type="project" value="UniProtKB-KW"/>
</dbReference>
<dbReference type="GO" id="GO:0009245">
    <property type="term" value="P:lipid A biosynthetic process"/>
    <property type="evidence" value="ECO:0007669"/>
    <property type="project" value="UniProtKB-UniRule"/>
</dbReference>
<dbReference type="GO" id="GO:0009252">
    <property type="term" value="P:peptidoglycan biosynthetic process"/>
    <property type="evidence" value="ECO:0007669"/>
    <property type="project" value="UniProtKB-UniRule"/>
</dbReference>
<dbReference type="GO" id="GO:0008360">
    <property type="term" value="P:regulation of cell shape"/>
    <property type="evidence" value="ECO:0007669"/>
    <property type="project" value="UniProtKB-KW"/>
</dbReference>
<dbReference type="GO" id="GO:0006048">
    <property type="term" value="P:UDP-N-acetylglucosamine biosynthetic process"/>
    <property type="evidence" value="ECO:0007669"/>
    <property type="project" value="UniProtKB-UniPathway"/>
</dbReference>
<dbReference type="CDD" id="cd02540">
    <property type="entry name" value="GT2_GlmU_N_bac"/>
    <property type="match status" value="1"/>
</dbReference>
<dbReference type="CDD" id="cd03353">
    <property type="entry name" value="LbH_GlmU_C"/>
    <property type="match status" value="1"/>
</dbReference>
<dbReference type="Gene3D" id="2.160.10.10">
    <property type="entry name" value="Hexapeptide repeat proteins"/>
    <property type="match status" value="1"/>
</dbReference>
<dbReference type="Gene3D" id="3.90.550.10">
    <property type="entry name" value="Spore Coat Polysaccharide Biosynthesis Protein SpsA, Chain A"/>
    <property type="match status" value="1"/>
</dbReference>
<dbReference type="HAMAP" id="MF_01631">
    <property type="entry name" value="GlmU"/>
    <property type="match status" value="1"/>
</dbReference>
<dbReference type="InterPro" id="IPR005882">
    <property type="entry name" value="Bifunctional_GlmU"/>
</dbReference>
<dbReference type="InterPro" id="IPR050065">
    <property type="entry name" value="GlmU-like"/>
</dbReference>
<dbReference type="InterPro" id="IPR038009">
    <property type="entry name" value="GlmU_C_LbH"/>
</dbReference>
<dbReference type="InterPro" id="IPR001451">
    <property type="entry name" value="Hexapep"/>
</dbReference>
<dbReference type="InterPro" id="IPR025877">
    <property type="entry name" value="MobA-like_NTP_Trfase"/>
</dbReference>
<dbReference type="InterPro" id="IPR029044">
    <property type="entry name" value="Nucleotide-diphossugar_trans"/>
</dbReference>
<dbReference type="InterPro" id="IPR011004">
    <property type="entry name" value="Trimer_LpxA-like_sf"/>
</dbReference>
<dbReference type="NCBIfam" id="TIGR01173">
    <property type="entry name" value="glmU"/>
    <property type="match status" value="1"/>
</dbReference>
<dbReference type="PANTHER" id="PTHR43584:SF3">
    <property type="entry name" value="BIFUNCTIONAL PROTEIN GLMU"/>
    <property type="match status" value="1"/>
</dbReference>
<dbReference type="PANTHER" id="PTHR43584">
    <property type="entry name" value="NUCLEOTIDYL TRANSFERASE"/>
    <property type="match status" value="1"/>
</dbReference>
<dbReference type="Pfam" id="PF00132">
    <property type="entry name" value="Hexapep"/>
    <property type="match status" value="1"/>
</dbReference>
<dbReference type="Pfam" id="PF14602">
    <property type="entry name" value="Hexapep_2"/>
    <property type="match status" value="1"/>
</dbReference>
<dbReference type="Pfam" id="PF12804">
    <property type="entry name" value="NTP_transf_3"/>
    <property type="match status" value="1"/>
</dbReference>
<dbReference type="SUPFAM" id="SSF53448">
    <property type="entry name" value="Nucleotide-diphospho-sugar transferases"/>
    <property type="match status" value="1"/>
</dbReference>
<dbReference type="SUPFAM" id="SSF51161">
    <property type="entry name" value="Trimeric LpxA-like enzymes"/>
    <property type="match status" value="1"/>
</dbReference>
<reference key="1">
    <citation type="journal article" date="2008" name="Proc. Natl. Acad. Sci. U.S.A.">
        <title>Nitrogen fixation island and rhizosphere competence traits in the genome of root-associated Pseudomonas stutzeri A1501.</title>
        <authorList>
            <person name="Yan Y."/>
            <person name="Yang J."/>
            <person name="Dou Y."/>
            <person name="Chen M."/>
            <person name="Ping S."/>
            <person name="Peng J."/>
            <person name="Lu W."/>
            <person name="Zhang W."/>
            <person name="Yao Z."/>
            <person name="Li H."/>
            <person name="Liu W."/>
            <person name="He S."/>
            <person name="Geng L."/>
            <person name="Zhang X."/>
            <person name="Yang F."/>
            <person name="Yu H."/>
            <person name="Zhan Y."/>
            <person name="Li D."/>
            <person name="Lin Z."/>
            <person name="Wang Y."/>
            <person name="Elmerich C."/>
            <person name="Lin M."/>
            <person name="Jin Q."/>
        </authorList>
    </citation>
    <scope>NUCLEOTIDE SEQUENCE [LARGE SCALE GENOMIC DNA]</scope>
    <source>
        <strain>A1501</strain>
    </source>
</reference>